<keyword id="KW-0240">DNA-directed RNA polymerase</keyword>
<keyword id="KW-0479">Metal-binding</keyword>
<keyword id="KW-0548">Nucleotidyltransferase</keyword>
<keyword id="KW-1185">Reference proteome</keyword>
<keyword id="KW-0804">Transcription</keyword>
<keyword id="KW-0808">Transferase</keyword>
<keyword id="KW-0862">Zinc</keyword>
<proteinExistence type="inferred from homology"/>
<organism>
    <name type="scientific">Gloeobacter violaceus (strain ATCC 29082 / PCC 7421)</name>
    <dbReference type="NCBI Taxonomy" id="251221"/>
    <lineage>
        <taxon>Bacteria</taxon>
        <taxon>Bacillati</taxon>
        <taxon>Cyanobacteriota</taxon>
        <taxon>Cyanophyceae</taxon>
        <taxon>Gloeobacterales</taxon>
        <taxon>Gloeobacteraceae</taxon>
        <taxon>Gloeobacter</taxon>
    </lineage>
</organism>
<name>RPOC2_GLOVI</name>
<dbReference type="EC" id="2.7.7.6" evidence="1"/>
<dbReference type="EMBL" id="BA000045">
    <property type="protein sequence ID" value="BAC92219.1"/>
    <property type="molecule type" value="Genomic_DNA"/>
</dbReference>
<dbReference type="RefSeq" id="NP_927224.1">
    <property type="nucleotide sequence ID" value="NC_005125.1"/>
</dbReference>
<dbReference type="RefSeq" id="WP_011144262.1">
    <property type="nucleotide sequence ID" value="NC_005125.1"/>
</dbReference>
<dbReference type="SMR" id="Q7NDF7"/>
<dbReference type="STRING" id="251221.gene:10761797"/>
<dbReference type="EnsemblBacteria" id="BAC92219">
    <property type="protein sequence ID" value="BAC92219"/>
    <property type="gene ID" value="BAC92219"/>
</dbReference>
<dbReference type="KEGG" id="gvi:glr4278"/>
<dbReference type="PATRIC" id="fig|251221.4.peg.4306"/>
<dbReference type="eggNOG" id="COG0086">
    <property type="taxonomic scope" value="Bacteria"/>
</dbReference>
<dbReference type="HOGENOM" id="CLU_000524_1_0_3"/>
<dbReference type="InParanoid" id="Q7NDF7"/>
<dbReference type="OrthoDB" id="9815296at2"/>
<dbReference type="PhylomeDB" id="Q7NDF7"/>
<dbReference type="Proteomes" id="UP000000557">
    <property type="component" value="Chromosome"/>
</dbReference>
<dbReference type="GO" id="GO:0000428">
    <property type="term" value="C:DNA-directed RNA polymerase complex"/>
    <property type="evidence" value="ECO:0007669"/>
    <property type="project" value="UniProtKB-KW"/>
</dbReference>
<dbReference type="GO" id="GO:0003677">
    <property type="term" value="F:DNA binding"/>
    <property type="evidence" value="ECO:0007669"/>
    <property type="project" value="UniProtKB-UniRule"/>
</dbReference>
<dbReference type="GO" id="GO:0003899">
    <property type="term" value="F:DNA-directed RNA polymerase activity"/>
    <property type="evidence" value="ECO:0007669"/>
    <property type="project" value="UniProtKB-UniRule"/>
</dbReference>
<dbReference type="GO" id="GO:0008270">
    <property type="term" value="F:zinc ion binding"/>
    <property type="evidence" value="ECO:0007669"/>
    <property type="project" value="UniProtKB-UniRule"/>
</dbReference>
<dbReference type="GO" id="GO:0006351">
    <property type="term" value="P:DNA-templated transcription"/>
    <property type="evidence" value="ECO:0007669"/>
    <property type="project" value="UniProtKB-UniRule"/>
</dbReference>
<dbReference type="CDD" id="cd02655">
    <property type="entry name" value="RNAP_beta'_C"/>
    <property type="match status" value="1"/>
</dbReference>
<dbReference type="FunFam" id="1.10.150.390:FF:000002">
    <property type="entry name" value="DNA-directed RNA polymerase subunit beta"/>
    <property type="match status" value="1"/>
</dbReference>
<dbReference type="Gene3D" id="1.10.132.30">
    <property type="match status" value="1"/>
</dbReference>
<dbReference type="Gene3D" id="1.10.150.390">
    <property type="match status" value="1"/>
</dbReference>
<dbReference type="Gene3D" id="1.10.1790.20">
    <property type="match status" value="1"/>
</dbReference>
<dbReference type="Gene3D" id="2.40.50.100">
    <property type="match status" value="1"/>
</dbReference>
<dbReference type="Gene3D" id="1.10.274.100">
    <property type="entry name" value="RNA polymerase Rpb1, domain 3"/>
    <property type="match status" value="1"/>
</dbReference>
<dbReference type="HAMAP" id="MF_01324">
    <property type="entry name" value="RNApol_bact_RpoC2"/>
    <property type="match status" value="1"/>
</dbReference>
<dbReference type="InterPro" id="IPR012756">
    <property type="entry name" value="DNA-dir_RpoC2_beta_pp"/>
</dbReference>
<dbReference type="InterPro" id="IPR045867">
    <property type="entry name" value="DNA-dir_RpoC_beta_prime"/>
</dbReference>
<dbReference type="InterPro" id="IPR007066">
    <property type="entry name" value="RNA_pol_Rpb1_3"/>
</dbReference>
<dbReference type="InterPro" id="IPR042102">
    <property type="entry name" value="RNA_pol_Rpb1_3_sf"/>
</dbReference>
<dbReference type="InterPro" id="IPR007083">
    <property type="entry name" value="RNA_pol_Rpb1_4"/>
</dbReference>
<dbReference type="InterPro" id="IPR007081">
    <property type="entry name" value="RNA_pol_Rpb1_5"/>
</dbReference>
<dbReference type="InterPro" id="IPR038120">
    <property type="entry name" value="Rpb1_funnel_sf"/>
</dbReference>
<dbReference type="NCBIfam" id="NF002724">
    <property type="entry name" value="PRK02597.1"/>
    <property type="match status" value="1"/>
</dbReference>
<dbReference type="NCBIfam" id="TIGR02388">
    <property type="entry name" value="rpoC2_cyan"/>
    <property type="match status" value="1"/>
</dbReference>
<dbReference type="PANTHER" id="PTHR19376">
    <property type="entry name" value="DNA-DIRECTED RNA POLYMERASE"/>
    <property type="match status" value="1"/>
</dbReference>
<dbReference type="PANTHER" id="PTHR19376:SF54">
    <property type="entry name" value="DNA-DIRECTED RNA POLYMERASE SUBUNIT BETA"/>
    <property type="match status" value="1"/>
</dbReference>
<dbReference type="Pfam" id="PF04983">
    <property type="entry name" value="RNA_pol_Rpb1_3"/>
    <property type="match status" value="1"/>
</dbReference>
<dbReference type="Pfam" id="PF05000">
    <property type="entry name" value="RNA_pol_Rpb1_4"/>
    <property type="match status" value="1"/>
</dbReference>
<dbReference type="Pfam" id="PF04998">
    <property type="entry name" value="RNA_pol_Rpb1_5"/>
    <property type="match status" value="1"/>
</dbReference>
<dbReference type="SUPFAM" id="SSF64484">
    <property type="entry name" value="beta and beta-prime subunits of DNA dependent RNA-polymerase"/>
    <property type="match status" value="1"/>
</dbReference>
<evidence type="ECO:0000255" key="1">
    <source>
        <dbReference type="HAMAP-Rule" id="MF_01324"/>
    </source>
</evidence>
<sequence length="1262" mass="137588">MTQEPQPKFINRKIDKKGLGKLISWAFSHYGTARTALLADNLKNLGFRFATRGAVSISVEDLQVPDSKVNILETAEREIQRAEERFTRGEITEVERFQKVIDTWAGATQELTEGVKENFQERNPLNSVGMMAFSGARGNLSQVRQLVGMRGLMANPQGEIIDLPIKANFREGLNVTEYIISSYGARKGLVDTALRTADSGYLTRRLVDVSQDVIVREEDCTTQRGIFLGSLRDGDKMIVSLEERLVGRVAGRDVVHPVTGEVLAPRNTQFDYDSAARIARSGVDAVMVRSPLTCEANRSVCRMCYGWSLAHSHLVDIGEAVGIIAAQSIGEPGTQLTMRTFHTGGVFTGEVAKPLKAPFDGKIKFSSALKARPMRTRHGDDAYQADQAGTMSLEGSDGKKETVTITPGSLLLVRDGQRIEAGTMYAELALVGKTARKSTEKAQKEVFSDLAGEIKFADLVPEVKTDRQGNETQYASRLGLLWVLSGEVYNLPPGAETSLERGGKVEQGGVIAETRLVTEHGGGVRLKEQDAKGGREVEIITASVMLDKAIVHEEKSQGREHYSLETDNGQVFALKVSPGTKVNNGQVVAERVDDRYMTKSGGLIKYSEGVEVAKARGKQGYEVLKGGTLLWIPEETHEVNKDISLLEVEDGQYVEAGVQVVKDIYCLTSGVVAIAQRNDILREVVIKPGELHLLDAPSDLKVAHESFAYPGTEVIPGVVTTDLRYVEQVETPEGLAVLLRPVEEFPVPDEPDAPSQEASQQAGSSIRLRGMQRIPYRDGDRVKAIDGIELLKTQLVLEITDQAAQLAADIEFVPDEKDPSMVRLQLVILETLLIRRDVAADLLHGSTLTHILVKDGERIGPGAIIARTEILAKQAGTVRGISRVGQTVRRILLVTQSDLVNVPVEGTLTVKPGDLLRAGDKLAKDFASPESGQVVLAESGRVVVRIGRPYLVSGGAILLVVDGDLIQRGDNLALLVFERAKTGDIIQGLPRVEELLEGRKPKEMCVLVERPGKVQITQMPDESYQVSVVEDDGGVTNYPIIGQSLVVVDGQQVQTGESITDGPSNPHDILRIFTAREGLQKGIESVQRYLVNEVQQVYRSQGVEIHDKHIEIIVRQMTSKVRVEDGGDTTFLPGELVELRQIEQVNEAMAVTGGAPADCTPVLLGITKASLNTDSFISAASFQETTRVLTEAAIEGKSDWLRGLKENVIIGRLIPAGTGFNAYEEAEEVIEDDELIDDTLGLRTVGVAFAGDDDFVEEEDED</sequence>
<comment type="function">
    <text evidence="1">DNA-dependent RNA polymerase catalyzes the transcription of DNA into RNA using the four ribonucleoside triphosphates as substrates.</text>
</comment>
<comment type="catalytic activity">
    <reaction evidence="1">
        <text>RNA(n) + a ribonucleoside 5'-triphosphate = RNA(n+1) + diphosphate</text>
        <dbReference type="Rhea" id="RHEA:21248"/>
        <dbReference type="Rhea" id="RHEA-COMP:14527"/>
        <dbReference type="Rhea" id="RHEA-COMP:17342"/>
        <dbReference type="ChEBI" id="CHEBI:33019"/>
        <dbReference type="ChEBI" id="CHEBI:61557"/>
        <dbReference type="ChEBI" id="CHEBI:140395"/>
        <dbReference type="EC" id="2.7.7.6"/>
    </reaction>
</comment>
<comment type="cofactor">
    <cofactor evidence="1">
        <name>Zn(2+)</name>
        <dbReference type="ChEBI" id="CHEBI:29105"/>
    </cofactor>
    <text evidence="1">Binds 1 Zn(2+) ion per subunit.</text>
</comment>
<comment type="subunit">
    <text evidence="1">In cyanobacteria the RNAP catalytic core is composed of 2 alpha, 1 beta, 1 beta', 1 gamma and 1 omega subunit. When a sigma factor is associated with the core the holoenzyme is formed, which can initiate transcription.</text>
</comment>
<comment type="similarity">
    <text evidence="1">Belongs to the RNA polymerase beta' chain family. RpoC2 subfamily.</text>
</comment>
<gene>
    <name evidence="1" type="primary">rpoC2</name>
    <name type="ordered locus">glr4278</name>
</gene>
<feature type="chain" id="PRO_0000067903" description="DNA-directed RNA polymerase subunit beta'">
    <location>
        <begin position="1"/>
        <end position="1262"/>
    </location>
</feature>
<feature type="binding site" evidence="1">
    <location>
        <position position="220"/>
    </location>
    <ligand>
        <name>Zn(2+)</name>
        <dbReference type="ChEBI" id="CHEBI:29105"/>
    </ligand>
</feature>
<feature type="binding site" evidence="1">
    <location>
        <position position="294"/>
    </location>
    <ligand>
        <name>Zn(2+)</name>
        <dbReference type="ChEBI" id="CHEBI:29105"/>
    </ligand>
</feature>
<feature type="binding site" evidence="1">
    <location>
        <position position="301"/>
    </location>
    <ligand>
        <name>Zn(2+)</name>
        <dbReference type="ChEBI" id="CHEBI:29105"/>
    </ligand>
</feature>
<feature type="binding site" evidence="1">
    <location>
        <position position="304"/>
    </location>
    <ligand>
        <name>Zn(2+)</name>
        <dbReference type="ChEBI" id="CHEBI:29105"/>
    </ligand>
</feature>
<reference key="1">
    <citation type="journal article" date="2003" name="DNA Res.">
        <title>Complete genome structure of Gloeobacter violaceus PCC 7421, a cyanobacterium that lacks thylakoids.</title>
        <authorList>
            <person name="Nakamura Y."/>
            <person name="Kaneko T."/>
            <person name="Sato S."/>
            <person name="Mimuro M."/>
            <person name="Miyashita H."/>
            <person name="Tsuchiya T."/>
            <person name="Sasamoto S."/>
            <person name="Watanabe A."/>
            <person name="Kawashima K."/>
            <person name="Kishida Y."/>
            <person name="Kiyokawa C."/>
            <person name="Kohara M."/>
            <person name="Matsumoto M."/>
            <person name="Matsuno A."/>
            <person name="Nakazaki N."/>
            <person name="Shimpo S."/>
            <person name="Takeuchi C."/>
            <person name="Yamada M."/>
            <person name="Tabata S."/>
        </authorList>
    </citation>
    <scope>NUCLEOTIDE SEQUENCE [LARGE SCALE GENOMIC DNA]</scope>
    <source>
        <strain>ATCC 29082 / PCC 7421</strain>
    </source>
</reference>
<accession>Q7NDF7</accession>
<protein>
    <recommendedName>
        <fullName evidence="1">DNA-directed RNA polymerase subunit beta'</fullName>
        <shortName evidence="1">RNAP subunit beta'</shortName>
        <ecNumber evidence="1">2.7.7.6</ecNumber>
    </recommendedName>
    <alternativeName>
        <fullName evidence="1">RNA polymerase subunit beta'</fullName>
    </alternativeName>
    <alternativeName>
        <fullName evidence="1">Transcriptase subunit beta'</fullName>
    </alternativeName>
</protein>